<keyword id="KW-0007">Acetylation</keyword>
<keyword id="KW-0010">Activator</keyword>
<keyword id="KW-0238">DNA-binding</keyword>
<keyword id="KW-0479">Metal-binding</keyword>
<keyword id="KW-0539">Nucleus</keyword>
<keyword id="KW-1185">Reference proteome</keyword>
<keyword id="KW-0677">Repeat</keyword>
<keyword id="KW-0804">Transcription</keyword>
<keyword id="KW-0805">Transcription regulation</keyword>
<keyword id="KW-0808">Transferase</keyword>
<keyword id="KW-0832">Ubl conjugation</keyword>
<keyword id="KW-0833">Ubl conjugation pathway</keyword>
<keyword id="KW-0862">Zinc</keyword>
<keyword id="KW-0863">Zinc-finger</keyword>
<gene>
    <name type="primary">EGR2</name>
</gene>
<organism>
    <name type="scientific">Sus scrofa</name>
    <name type="common">Pig</name>
    <dbReference type="NCBI Taxonomy" id="9823"/>
    <lineage>
        <taxon>Eukaryota</taxon>
        <taxon>Metazoa</taxon>
        <taxon>Chordata</taxon>
        <taxon>Craniata</taxon>
        <taxon>Vertebrata</taxon>
        <taxon>Euteleostomi</taxon>
        <taxon>Mammalia</taxon>
        <taxon>Eutheria</taxon>
        <taxon>Laurasiatheria</taxon>
        <taxon>Artiodactyla</taxon>
        <taxon>Suina</taxon>
        <taxon>Suidae</taxon>
        <taxon>Sus</taxon>
    </lineage>
</organism>
<evidence type="ECO:0000250" key="1">
    <source>
        <dbReference type="UniProtKB" id="P08152"/>
    </source>
</evidence>
<evidence type="ECO:0000250" key="2">
    <source>
        <dbReference type="UniProtKB" id="P11161"/>
    </source>
</evidence>
<evidence type="ECO:0000255" key="3">
    <source>
        <dbReference type="PROSITE-ProRule" id="PRU00042"/>
    </source>
</evidence>
<evidence type="ECO:0000256" key="4">
    <source>
        <dbReference type="SAM" id="MobiDB-lite"/>
    </source>
</evidence>
<evidence type="ECO:0000305" key="5"/>
<accession>A1XSY8</accession>
<dbReference type="EC" id="2.3.2.-" evidence="2"/>
<dbReference type="EMBL" id="DQ665829">
    <property type="protein sequence ID" value="ABG49107.1"/>
    <property type="molecule type" value="mRNA"/>
</dbReference>
<dbReference type="RefSeq" id="NP_001090957.1">
    <property type="nucleotide sequence ID" value="NM_001097488.1"/>
</dbReference>
<dbReference type="SMR" id="A1XSY8"/>
<dbReference type="FunCoup" id="A1XSY8">
    <property type="interactions" value="167"/>
</dbReference>
<dbReference type="STRING" id="9823.ENSSSCP00000010899"/>
<dbReference type="PaxDb" id="9823-ENSSSCP00000010899"/>
<dbReference type="Ensembl" id="ENSSSCT00015000019.1">
    <property type="protein sequence ID" value="ENSSSCP00015000009.1"/>
    <property type="gene ID" value="ENSSSCG00015000015.1"/>
</dbReference>
<dbReference type="Ensembl" id="ENSSSCT00025106300.1">
    <property type="protein sequence ID" value="ENSSSCP00025047689.1"/>
    <property type="gene ID" value="ENSSSCG00025076671.1"/>
</dbReference>
<dbReference type="Ensembl" id="ENSSSCT00030001986.1">
    <property type="protein sequence ID" value="ENSSSCP00030000812.1"/>
    <property type="gene ID" value="ENSSSCG00030001532.1"/>
</dbReference>
<dbReference type="Ensembl" id="ENSSSCT00035100914.1">
    <property type="protein sequence ID" value="ENSSSCP00035042903.1"/>
    <property type="gene ID" value="ENSSSCG00035074333.1"/>
</dbReference>
<dbReference type="Ensembl" id="ENSSSCT00040085127.1">
    <property type="protein sequence ID" value="ENSSSCP00040037202.1"/>
    <property type="gene ID" value="ENSSSCG00040062455.1"/>
</dbReference>
<dbReference type="Ensembl" id="ENSSSCT00045054904.1">
    <property type="protein sequence ID" value="ENSSSCP00045038266.1"/>
    <property type="gene ID" value="ENSSSCG00045032102.1"/>
</dbReference>
<dbReference type="Ensembl" id="ENSSSCT00050095194.1">
    <property type="protein sequence ID" value="ENSSSCP00050040997.1"/>
    <property type="gene ID" value="ENSSSCG00050069806.1"/>
</dbReference>
<dbReference type="Ensembl" id="ENSSSCT00055029550.1">
    <property type="protein sequence ID" value="ENSSSCP00055023524.1"/>
    <property type="gene ID" value="ENSSSCG00055014946.1"/>
</dbReference>
<dbReference type="Ensembl" id="ENSSSCT00060044958.1">
    <property type="protein sequence ID" value="ENSSSCP00060019234.1"/>
    <property type="gene ID" value="ENSSSCG00060033163.1"/>
</dbReference>
<dbReference type="Ensembl" id="ENSSSCT00065095440.1">
    <property type="protein sequence ID" value="ENSSSCP00065041762.1"/>
    <property type="gene ID" value="ENSSSCG00065069508.1"/>
</dbReference>
<dbReference type="Ensembl" id="ENSSSCT00070022960.1">
    <property type="protein sequence ID" value="ENSSSCP00070018996.1"/>
    <property type="gene ID" value="ENSSSCG00070011768.1"/>
</dbReference>
<dbReference type="Ensembl" id="ENSSSCT00115012401">
    <property type="protein sequence ID" value="ENSSSCP00115011713"/>
    <property type="gene ID" value="ENSSSCG00115007116"/>
</dbReference>
<dbReference type="GeneID" id="100038004"/>
<dbReference type="KEGG" id="ssc:100038004"/>
<dbReference type="CTD" id="1959"/>
<dbReference type="eggNOG" id="KOG1721">
    <property type="taxonomic scope" value="Eukaryota"/>
</dbReference>
<dbReference type="HOGENOM" id="CLU_043235_0_0_1"/>
<dbReference type="InParanoid" id="A1XSY8"/>
<dbReference type="OrthoDB" id="8197458at2759"/>
<dbReference type="TreeFam" id="TF318980"/>
<dbReference type="Reactome" id="R-SSC-9031628">
    <property type="pathway name" value="NGF-stimulated transcription"/>
</dbReference>
<dbReference type="UniPathway" id="UPA00886"/>
<dbReference type="Proteomes" id="UP000008227">
    <property type="component" value="Unplaced"/>
</dbReference>
<dbReference type="Proteomes" id="UP000314985">
    <property type="component" value="Chromosome 14"/>
</dbReference>
<dbReference type="Proteomes" id="UP000694570">
    <property type="component" value="Unplaced"/>
</dbReference>
<dbReference type="Proteomes" id="UP000694571">
    <property type="component" value="Unplaced"/>
</dbReference>
<dbReference type="Proteomes" id="UP000694720">
    <property type="component" value="Unplaced"/>
</dbReference>
<dbReference type="Proteomes" id="UP000694722">
    <property type="component" value="Unplaced"/>
</dbReference>
<dbReference type="Proteomes" id="UP000694723">
    <property type="component" value="Unplaced"/>
</dbReference>
<dbReference type="Proteomes" id="UP000694724">
    <property type="component" value="Unplaced"/>
</dbReference>
<dbReference type="Proteomes" id="UP000694725">
    <property type="component" value="Unplaced"/>
</dbReference>
<dbReference type="Proteomes" id="UP000694726">
    <property type="component" value="Unplaced"/>
</dbReference>
<dbReference type="Proteomes" id="UP000694727">
    <property type="component" value="Unplaced"/>
</dbReference>
<dbReference type="Proteomes" id="UP000694728">
    <property type="component" value="Unplaced"/>
</dbReference>
<dbReference type="Bgee" id="ENSSSCG00000010224">
    <property type="expression patterns" value="Expressed in granulosa cell and 28 other cell types or tissues"/>
</dbReference>
<dbReference type="GO" id="GO:0005737">
    <property type="term" value="C:cytoplasm"/>
    <property type="evidence" value="ECO:0000250"/>
    <property type="project" value="UniProtKB"/>
</dbReference>
<dbReference type="GO" id="GO:0005654">
    <property type="term" value="C:nucleoplasm"/>
    <property type="evidence" value="ECO:0007669"/>
    <property type="project" value="UniProtKB-ARBA"/>
</dbReference>
<dbReference type="GO" id="GO:0005634">
    <property type="term" value="C:nucleus"/>
    <property type="evidence" value="ECO:0000250"/>
    <property type="project" value="UniProtKB"/>
</dbReference>
<dbReference type="GO" id="GO:0003682">
    <property type="term" value="F:chromatin binding"/>
    <property type="evidence" value="ECO:0000250"/>
    <property type="project" value="UniProtKB"/>
</dbReference>
<dbReference type="GO" id="GO:0003700">
    <property type="term" value="F:DNA-binding transcription factor activity"/>
    <property type="evidence" value="ECO:0000250"/>
    <property type="project" value="UniProtKB"/>
</dbReference>
<dbReference type="GO" id="GO:0000981">
    <property type="term" value="F:DNA-binding transcription factor activity, RNA polymerase II-specific"/>
    <property type="evidence" value="ECO:0000250"/>
    <property type="project" value="UniProtKB"/>
</dbReference>
<dbReference type="GO" id="GO:0000978">
    <property type="term" value="F:RNA polymerase II cis-regulatory region sequence-specific DNA binding"/>
    <property type="evidence" value="ECO:0000318"/>
    <property type="project" value="GO_Central"/>
</dbReference>
<dbReference type="GO" id="GO:0043565">
    <property type="term" value="F:sequence-specific DNA binding"/>
    <property type="evidence" value="ECO:0000250"/>
    <property type="project" value="UniProtKB"/>
</dbReference>
<dbReference type="GO" id="GO:0000976">
    <property type="term" value="F:transcription cis-regulatory region binding"/>
    <property type="evidence" value="ECO:0000250"/>
    <property type="project" value="UniProtKB"/>
</dbReference>
<dbReference type="GO" id="GO:0016740">
    <property type="term" value="F:transferase activity"/>
    <property type="evidence" value="ECO:0007669"/>
    <property type="project" value="UniProtKB-KW"/>
</dbReference>
<dbReference type="GO" id="GO:0008270">
    <property type="term" value="F:zinc ion binding"/>
    <property type="evidence" value="ECO:0007669"/>
    <property type="project" value="UniProtKB-KW"/>
</dbReference>
<dbReference type="GO" id="GO:0021612">
    <property type="term" value="P:facial nerve structural organization"/>
    <property type="evidence" value="ECO:0000250"/>
    <property type="project" value="UniProtKB"/>
</dbReference>
<dbReference type="GO" id="GO:0045893">
    <property type="term" value="P:positive regulation of DNA-templated transcription"/>
    <property type="evidence" value="ECO:0000250"/>
    <property type="project" value="UniProtKB"/>
</dbReference>
<dbReference type="GO" id="GO:0031643">
    <property type="term" value="P:positive regulation of myelination"/>
    <property type="evidence" value="ECO:0000250"/>
    <property type="project" value="UniProtKB"/>
</dbReference>
<dbReference type="GO" id="GO:0014040">
    <property type="term" value="P:positive regulation of Schwann cell differentiation"/>
    <property type="evidence" value="ECO:0000250"/>
    <property type="project" value="UniProtKB"/>
</dbReference>
<dbReference type="GO" id="GO:0045944">
    <property type="term" value="P:positive regulation of transcription by RNA polymerase II"/>
    <property type="evidence" value="ECO:0000250"/>
    <property type="project" value="UniProtKB"/>
</dbReference>
<dbReference type="GO" id="GO:0006611">
    <property type="term" value="P:protein export from nucleus"/>
    <property type="evidence" value="ECO:0000250"/>
    <property type="project" value="UniProtKB"/>
</dbReference>
<dbReference type="GO" id="GO:0016925">
    <property type="term" value="P:protein sumoylation"/>
    <property type="evidence" value="ECO:0007669"/>
    <property type="project" value="UniProtKB-UniPathway"/>
</dbReference>
<dbReference type="GO" id="GO:0006357">
    <property type="term" value="P:regulation of transcription by RNA polymerase II"/>
    <property type="evidence" value="ECO:0000318"/>
    <property type="project" value="GO_Central"/>
</dbReference>
<dbReference type="GO" id="GO:0021659">
    <property type="term" value="P:rhombomere 3 structural organization"/>
    <property type="evidence" value="ECO:0000250"/>
    <property type="project" value="UniProtKB"/>
</dbReference>
<dbReference type="GO" id="GO:0021665">
    <property type="term" value="P:rhombomere 5 structural organization"/>
    <property type="evidence" value="ECO:0000250"/>
    <property type="project" value="UniProtKB"/>
</dbReference>
<dbReference type="GO" id="GO:0014037">
    <property type="term" value="P:Schwann cell differentiation"/>
    <property type="evidence" value="ECO:0000250"/>
    <property type="project" value="UniProtKB"/>
</dbReference>
<dbReference type="GO" id="GO:0035914">
    <property type="term" value="P:skeletal muscle cell differentiation"/>
    <property type="evidence" value="ECO:0000250"/>
    <property type="project" value="UniProtKB"/>
</dbReference>
<dbReference type="FunFam" id="3.30.160.60:FF:000837">
    <property type="entry name" value="E3 SUMO-protein ligase EGR2 isoform X1"/>
    <property type="match status" value="1"/>
</dbReference>
<dbReference type="FunFam" id="3.30.160.60:FF:000324">
    <property type="entry name" value="Early growth response protein 4"/>
    <property type="match status" value="1"/>
</dbReference>
<dbReference type="FunFam" id="3.30.160.60:FF:000419">
    <property type="entry name" value="Early growth response protein 4"/>
    <property type="match status" value="1"/>
</dbReference>
<dbReference type="Gene3D" id="3.30.160.60">
    <property type="entry name" value="Classic Zinc Finger"/>
    <property type="match status" value="3"/>
</dbReference>
<dbReference type="InterPro" id="IPR021849">
    <property type="entry name" value="EGR_N"/>
</dbReference>
<dbReference type="InterPro" id="IPR036236">
    <property type="entry name" value="Znf_C2H2_sf"/>
</dbReference>
<dbReference type="InterPro" id="IPR013087">
    <property type="entry name" value="Znf_C2H2_type"/>
</dbReference>
<dbReference type="PANTHER" id="PTHR23235:SF54">
    <property type="entry name" value="E3 SUMO-PROTEIN LIGASE EGR2"/>
    <property type="match status" value="1"/>
</dbReference>
<dbReference type="PANTHER" id="PTHR23235">
    <property type="entry name" value="KRUEPPEL-LIKE TRANSCRIPTION FACTOR"/>
    <property type="match status" value="1"/>
</dbReference>
<dbReference type="Pfam" id="PF11928">
    <property type="entry name" value="DUF3446"/>
    <property type="match status" value="1"/>
</dbReference>
<dbReference type="Pfam" id="PF00096">
    <property type="entry name" value="zf-C2H2"/>
    <property type="match status" value="3"/>
</dbReference>
<dbReference type="SMART" id="SM00355">
    <property type="entry name" value="ZnF_C2H2"/>
    <property type="match status" value="3"/>
</dbReference>
<dbReference type="SUPFAM" id="SSF57667">
    <property type="entry name" value="beta-beta-alpha zinc fingers"/>
    <property type="match status" value="2"/>
</dbReference>
<dbReference type="PROSITE" id="PS00028">
    <property type="entry name" value="ZINC_FINGER_C2H2_1"/>
    <property type="match status" value="3"/>
</dbReference>
<dbReference type="PROSITE" id="PS50157">
    <property type="entry name" value="ZINC_FINGER_C2H2_2"/>
    <property type="match status" value="3"/>
</dbReference>
<protein>
    <recommendedName>
        <fullName>E3 SUMO-protein ligase EGR2</fullName>
        <ecNumber evidence="2">2.3.2.-</ecNumber>
    </recommendedName>
    <alternativeName>
        <fullName evidence="5">E3 SUMO-protein transferase ERG2</fullName>
    </alternativeName>
    <alternativeName>
        <fullName>Early growth response protein 2</fullName>
        <shortName>EGR-2</shortName>
    </alternativeName>
</protein>
<proteinExistence type="evidence at transcript level"/>
<comment type="function">
    <text evidence="1">Sequence-specific DNA-binding transcription factor (By similarity). Plays a role in hindbrain segmentation by regulating the expression of a subset of homeobox containing genes and in Schwann cell myelination by regulating the expression of genes involved in the formation and maintenance of myelin (By similarity). Binds to two EGR2-consensus sites EGR2A (5'-CTGTAGGAG-3') and EGR2B (5'-ATGTAGGTG-3') in the HOXB3 enhancer and promotes HOXB3 transcriptional activation (By similarity). Binds to specific DNA sites located in the promoter region of HOXA4, HOXB2 and ERBB2 (By similarity). Regulates hindbrain segmentation by controlling the expression of Hox genes, such as HOXA4, HOXB3 and HOXB2, and thereby specifying odd and even rhombomeres (By similarity). Promotes the expression of HOXB3 in the rhombomere r5 in the hindbrain (By similarity). Regulates myelination in the peripheral nervous system after birth, possibly by regulating the expression of myelin proteins, such as MPZ, and by promoting the differentiation of Schwann cells (By similarity). Involved in the development of the jaw openener musculature, probably by playing a role in its innervation through trigeminal motor neurons (By similarity). May play a role in adipogenesis, possibly by regulating the expression of CEBPB (By similarity).</text>
</comment>
<comment type="function">
    <text evidence="2">E3 SUMO-protein ligase helping SUMO1 conjugation to its coregulators NAB1 and NAB2, whose sumoylation down-regulates EGR2 transcriptional activity.</text>
</comment>
<comment type="pathway">
    <text>Protein modification; protein sumoylation.</text>
</comment>
<comment type="subunit">
    <text evidence="1 2">Interacts with HCFC1 (By similarity). Interacts with WWP2 (By similarity). Interacts with UBC9 (By similarity). Interacts with CITED1 (By similarity). Interacts (via phosphorylated form) with SFN (By similarity).</text>
</comment>
<comment type="subcellular location">
    <subcellularLocation>
        <location evidence="1">Nucleus</location>
    </subcellularLocation>
</comment>
<comment type="PTM">
    <text evidence="1">Ubiquitinated by WWP2 leading to proteasomal degradation.</text>
</comment>
<comment type="PTM">
    <text evidence="1">Acetylated at Lys-246. May be deacetylated by HDAC6, HDAC10 or SIRT1.</text>
</comment>
<comment type="similarity">
    <text evidence="5">Belongs to the EGR C2H2-type zinc-finger protein family.</text>
</comment>
<sequence>MMTAKAVDKIPVTLSGFVHQLSDNIYPVEDLAATSVTIFPNAELGSPFDQMNGVAGDGMINIDMTGEKRSLDLPYPSSFAPVSAPRNQTFTYMGKFSIDPQYPGASCYPEGIINIVSAGILQGVTSPASTTASSNVTSASPNPLATGPLGVCTMSQTQPDLDHLYSPPPPPPYSGCAGDLYQDPSAFLSAATTSTSSSLAYPPPPSYPSPKPATDPGLFPMIPDYPGFFPSQCQRDLHGTAGPDRKPFPCPLDSLRVPPPLTPLSTIRNFTLGGPSAGTTGPGASGGSEGPRLPGSSAAAAAAAYNPHHLPLRPILRPRKYPNRPSKTPVHERPYPCPAEGCDRRFSRSDELTRHIRIHTGHKPFQCRICMRNFSRSDHLTTHIRTHTGEKPFACDYCGRKFARSDERKRHTKIHLRQKERKSSAPSSSVPAASTASCTGGAQPGGPLCSSNSSTIGGGSLGPCSSRTRTP</sequence>
<name>EGR2_PIG</name>
<feature type="chain" id="PRO_0000296388" description="E3 SUMO-protein ligase EGR2">
    <location>
        <begin position="1"/>
        <end position="471"/>
    </location>
</feature>
<feature type="zinc finger region" description="C2H2-type 1" evidence="3">
    <location>
        <begin position="335"/>
        <end position="359"/>
    </location>
</feature>
<feature type="zinc finger region" description="C2H2-type 2" evidence="3">
    <location>
        <begin position="365"/>
        <end position="387"/>
    </location>
</feature>
<feature type="zinc finger region" description="C2H2-type 3" evidence="3">
    <location>
        <begin position="393"/>
        <end position="415"/>
    </location>
</feature>
<feature type="region of interest" description="Disordered" evidence="4">
    <location>
        <begin position="127"/>
        <end position="177"/>
    </location>
</feature>
<feature type="region of interest" description="Disordered" evidence="4">
    <location>
        <begin position="273"/>
        <end position="301"/>
    </location>
</feature>
<feature type="region of interest" description="Disordered" evidence="4">
    <location>
        <begin position="313"/>
        <end position="336"/>
    </location>
</feature>
<feature type="region of interest" description="Disordered" evidence="4">
    <location>
        <begin position="406"/>
        <end position="471"/>
    </location>
</feature>
<feature type="compositionally biased region" description="Low complexity" evidence="4">
    <location>
        <begin position="127"/>
        <end position="143"/>
    </location>
</feature>
<feature type="compositionally biased region" description="Gly residues" evidence="4">
    <location>
        <begin position="280"/>
        <end position="289"/>
    </location>
</feature>
<feature type="compositionally biased region" description="Basic residues" evidence="4">
    <location>
        <begin position="410"/>
        <end position="420"/>
    </location>
</feature>
<feature type="compositionally biased region" description="Low complexity" evidence="4">
    <location>
        <begin position="424"/>
        <end position="437"/>
    </location>
</feature>
<feature type="modified residue" description="N6-acetyllysine; by EP300" evidence="1">
    <location>
        <position position="246"/>
    </location>
</feature>
<reference key="1">
    <citation type="submission" date="2006-06" db="EMBL/GenBank/DDBJ databases">
        <title>Cloning, chromosome mapping and expression characteristics of porcine KLF4, KLF5, KLF7 and EGR2.</title>
        <authorList>
            <person name="Yang H.W."/>
            <person name="Yang Z.Q."/>
        </authorList>
    </citation>
    <scope>NUCLEOTIDE SEQUENCE [MRNA]</scope>
    <source>
        <tissue>Lung</tissue>
    </source>
</reference>